<reference key="1">
    <citation type="submission" date="2006-03" db="EMBL/GenBank/DDBJ databases">
        <title>Complete sequence of Methylobacillus flagellatus KT.</title>
        <authorList>
            <consortium name="US DOE Joint Genome Institute"/>
            <person name="Copeland A."/>
            <person name="Lucas S."/>
            <person name="Lapidus A."/>
            <person name="Barry K."/>
            <person name="Detter J.C."/>
            <person name="Glavina del Rio T."/>
            <person name="Hammon N."/>
            <person name="Israni S."/>
            <person name="Dalin E."/>
            <person name="Tice H."/>
            <person name="Pitluck S."/>
            <person name="Brettin T."/>
            <person name="Bruce D."/>
            <person name="Han C."/>
            <person name="Tapia R."/>
            <person name="Saunders E."/>
            <person name="Gilna P."/>
            <person name="Schmutz J."/>
            <person name="Larimer F."/>
            <person name="Land M."/>
            <person name="Kyrpides N."/>
            <person name="Anderson I."/>
            <person name="Richardson P."/>
        </authorList>
    </citation>
    <scope>NUCLEOTIDE SEQUENCE [LARGE SCALE GENOMIC DNA]</scope>
    <source>
        <strain>ATCC 51484 / DSM 6875 / VKM B-1610 / KT</strain>
    </source>
</reference>
<organism>
    <name type="scientific">Methylobacillus flagellatus (strain ATCC 51484 / DSM 6875 / VKM B-1610 / KT)</name>
    <dbReference type="NCBI Taxonomy" id="265072"/>
    <lineage>
        <taxon>Bacteria</taxon>
        <taxon>Pseudomonadati</taxon>
        <taxon>Pseudomonadota</taxon>
        <taxon>Betaproteobacteria</taxon>
        <taxon>Nitrosomonadales</taxon>
        <taxon>Methylophilaceae</taxon>
        <taxon>Methylobacillus</taxon>
    </lineage>
</organism>
<dbReference type="EC" id="6.1.1.10" evidence="1"/>
<dbReference type="EMBL" id="CP000284">
    <property type="protein sequence ID" value="ABE49189.1"/>
    <property type="molecule type" value="Genomic_DNA"/>
</dbReference>
<dbReference type="EMBL" id="CP000284">
    <property type="protein sequence ID" value="ABE49333.1"/>
    <property type="molecule type" value="Genomic_DNA"/>
</dbReference>
<dbReference type="RefSeq" id="WP_011479286.1">
    <property type="nucleotide sequence ID" value="NC_007947.1"/>
</dbReference>
<dbReference type="SMR" id="Q1H2F4"/>
<dbReference type="STRING" id="265072.Mfla_0921"/>
<dbReference type="KEGG" id="mfa:Mfla_0921"/>
<dbReference type="KEGG" id="mfa:Mfla_1065"/>
<dbReference type="eggNOG" id="COG0073">
    <property type="taxonomic scope" value="Bacteria"/>
</dbReference>
<dbReference type="eggNOG" id="COG0143">
    <property type="taxonomic scope" value="Bacteria"/>
</dbReference>
<dbReference type="HOGENOM" id="CLU_009710_7_0_4"/>
<dbReference type="OrthoDB" id="9810191at2"/>
<dbReference type="Proteomes" id="UP000002440">
    <property type="component" value="Chromosome"/>
</dbReference>
<dbReference type="GO" id="GO:0005829">
    <property type="term" value="C:cytosol"/>
    <property type="evidence" value="ECO:0007669"/>
    <property type="project" value="TreeGrafter"/>
</dbReference>
<dbReference type="GO" id="GO:0005524">
    <property type="term" value="F:ATP binding"/>
    <property type="evidence" value="ECO:0007669"/>
    <property type="project" value="UniProtKB-UniRule"/>
</dbReference>
<dbReference type="GO" id="GO:0046872">
    <property type="term" value="F:metal ion binding"/>
    <property type="evidence" value="ECO:0007669"/>
    <property type="project" value="UniProtKB-KW"/>
</dbReference>
<dbReference type="GO" id="GO:0004825">
    <property type="term" value="F:methionine-tRNA ligase activity"/>
    <property type="evidence" value="ECO:0007669"/>
    <property type="project" value="UniProtKB-UniRule"/>
</dbReference>
<dbReference type="GO" id="GO:0000049">
    <property type="term" value="F:tRNA binding"/>
    <property type="evidence" value="ECO:0007669"/>
    <property type="project" value="UniProtKB-KW"/>
</dbReference>
<dbReference type="GO" id="GO:0006431">
    <property type="term" value="P:methionyl-tRNA aminoacylation"/>
    <property type="evidence" value="ECO:0007669"/>
    <property type="project" value="UniProtKB-UniRule"/>
</dbReference>
<dbReference type="CDD" id="cd07957">
    <property type="entry name" value="Anticodon_Ia_Met"/>
    <property type="match status" value="1"/>
</dbReference>
<dbReference type="CDD" id="cd00814">
    <property type="entry name" value="MetRS_core"/>
    <property type="match status" value="1"/>
</dbReference>
<dbReference type="CDD" id="cd02800">
    <property type="entry name" value="tRNA_bind_EcMetRS_like"/>
    <property type="match status" value="1"/>
</dbReference>
<dbReference type="FunFam" id="1.10.730.10:FF:000005">
    <property type="entry name" value="Methionine--tRNA ligase"/>
    <property type="match status" value="1"/>
</dbReference>
<dbReference type="FunFam" id="2.20.28.20:FF:000001">
    <property type="entry name" value="Methionine--tRNA ligase"/>
    <property type="match status" value="1"/>
</dbReference>
<dbReference type="FunFam" id="2.40.50.140:FF:000042">
    <property type="entry name" value="Methionine--tRNA ligase"/>
    <property type="match status" value="1"/>
</dbReference>
<dbReference type="Gene3D" id="3.40.50.620">
    <property type="entry name" value="HUPs"/>
    <property type="match status" value="1"/>
</dbReference>
<dbReference type="Gene3D" id="1.10.730.10">
    <property type="entry name" value="Isoleucyl-tRNA Synthetase, Domain 1"/>
    <property type="match status" value="1"/>
</dbReference>
<dbReference type="Gene3D" id="2.20.28.20">
    <property type="entry name" value="Methionyl-tRNA synthetase, Zn-domain"/>
    <property type="match status" value="1"/>
</dbReference>
<dbReference type="Gene3D" id="2.40.50.140">
    <property type="entry name" value="Nucleic acid-binding proteins"/>
    <property type="match status" value="1"/>
</dbReference>
<dbReference type="HAMAP" id="MF_00098">
    <property type="entry name" value="Met_tRNA_synth_type1"/>
    <property type="match status" value="1"/>
</dbReference>
<dbReference type="InterPro" id="IPR001412">
    <property type="entry name" value="aa-tRNA-synth_I_CS"/>
</dbReference>
<dbReference type="InterPro" id="IPR041872">
    <property type="entry name" value="Anticodon_Met"/>
</dbReference>
<dbReference type="InterPro" id="IPR004495">
    <property type="entry name" value="Met-tRNA-synth_bsu_C"/>
</dbReference>
<dbReference type="InterPro" id="IPR023458">
    <property type="entry name" value="Met-tRNA_ligase_1"/>
</dbReference>
<dbReference type="InterPro" id="IPR014758">
    <property type="entry name" value="Met-tRNA_synth"/>
</dbReference>
<dbReference type="InterPro" id="IPR015413">
    <property type="entry name" value="Methionyl/Leucyl_tRNA_Synth"/>
</dbReference>
<dbReference type="InterPro" id="IPR033911">
    <property type="entry name" value="MetRS_core"/>
</dbReference>
<dbReference type="InterPro" id="IPR029038">
    <property type="entry name" value="MetRS_Zn"/>
</dbReference>
<dbReference type="InterPro" id="IPR012340">
    <property type="entry name" value="NA-bd_OB-fold"/>
</dbReference>
<dbReference type="InterPro" id="IPR014729">
    <property type="entry name" value="Rossmann-like_a/b/a_fold"/>
</dbReference>
<dbReference type="InterPro" id="IPR002547">
    <property type="entry name" value="tRNA-bd_dom"/>
</dbReference>
<dbReference type="InterPro" id="IPR009080">
    <property type="entry name" value="tRNAsynth_Ia_anticodon-bd"/>
</dbReference>
<dbReference type="NCBIfam" id="TIGR00398">
    <property type="entry name" value="metG"/>
    <property type="match status" value="1"/>
</dbReference>
<dbReference type="NCBIfam" id="TIGR00399">
    <property type="entry name" value="metG_C_term"/>
    <property type="match status" value="1"/>
</dbReference>
<dbReference type="NCBIfam" id="NF001100">
    <property type="entry name" value="PRK00133.1"/>
    <property type="match status" value="1"/>
</dbReference>
<dbReference type="PANTHER" id="PTHR45765">
    <property type="entry name" value="METHIONINE--TRNA LIGASE"/>
    <property type="match status" value="1"/>
</dbReference>
<dbReference type="PANTHER" id="PTHR45765:SF1">
    <property type="entry name" value="METHIONINE--TRNA LIGASE, CYTOPLASMIC"/>
    <property type="match status" value="1"/>
</dbReference>
<dbReference type="Pfam" id="PF19303">
    <property type="entry name" value="Anticodon_3"/>
    <property type="match status" value="1"/>
</dbReference>
<dbReference type="Pfam" id="PF09334">
    <property type="entry name" value="tRNA-synt_1g"/>
    <property type="match status" value="1"/>
</dbReference>
<dbReference type="Pfam" id="PF01588">
    <property type="entry name" value="tRNA_bind"/>
    <property type="match status" value="1"/>
</dbReference>
<dbReference type="PRINTS" id="PR01041">
    <property type="entry name" value="TRNASYNTHMET"/>
</dbReference>
<dbReference type="SUPFAM" id="SSF47323">
    <property type="entry name" value="Anticodon-binding domain of a subclass of class I aminoacyl-tRNA synthetases"/>
    <property type="match status" value="1"/>
</dbReference>
<dbReference type="SUPFAM" id="SSF57770">
    <property type="entry name" value="Methionyl-tRNA synthetase (MetRS), Zn-domain"/>
    <property type="match status" value="1"/>
</dbReference>
<dbReference type="SUPFAM" id="SSF50249">
    <property type="entry name" value="Nucleic acid-binding proteins"/>
    <property type="match status" value="1"/>
</dbReference>
<dbReference type="SUPFAM" id="SSF52374">
    <property type="entry name" value="Nucleotidylyl transferase"/>
    <property type="match status" value="1"/>
</dbReference>
<dbReference type="PROSITE" id="PS00178">
    <property type="entry name" value="AA_TRNA_LIGASE_I"/>
    <property type="match status" value="1"/>
</dbReference>
<dbReference type="PROSITE" id="PS50886">
    <property type="entry name" value="TRBD"/>
    <property type="match status" value="1"/>
</dbReference>
<keyword id="KW-0030">Aminoacyl-tRNA synthetase</keyword>
<keyword id="KW-0067">ATP-binding</keyword>
<keyword id="KW-0963">Cytoplasm</keyword>
<keyword id="KW-0436">Ligase</keyword>
<keyword id="KW-0479">Metal-binding</keyword>
<keyword id="KW-0547">Nucleotide-binding</keyword>
<keyword id="KW-0648">Protein biosynthesis</keyword>
<keyword id="KW-1185">Reference proteome</keyword>
<keyword id="KW-0694">RNA-binding</keyword>
<keyword id="KW-0820">tRNA-binding</keyword>
<keyword id="KW-0862">Zinc</keyword>
<proteinExistence type="inferred from homology"/>
<protein>
    <recommendedName>
        <fullName evidence="1">Methionine--tRNA ligase</fullName>
        <ecNumber evidence="1">6.1.1.10</ecNumber>
    </recommendedName>
    <alternativeName>
        <fullName evidence="1">Methionyl-tRNA synthetase</fullName>
        <shortName evidence="1">MetRS</shortName>
    </alternativeName>
</protein>
<name>SYM_METFK</name>
<sequence>MMPGTGNTPANAWSAPRKLLVTSALPYANGSIHLGHMVEYVQSDIWVRFQKMQGHTVHYVCADDTHGTPIMLRAEKEGITPEELIRRVHAEHYADFSDFLVAFDNYYSTNSEENRELASQIYRALKANGKIATRTIEQYYDPVKHMFLPDRFIKGECPKCHAKDQYGDSCESCGTTYSPTELIAPYSAVSGAAPVRKETEHYFFKLSECEDFLRQWTRSGTLQPEAANKMGEWFASGLSDWDISRDAPYFGFEIPDAPGKYFYVWLDAPIGYMASFKDLATREGLDFDEYWKPDSQAELYHFIGKDILYFHALFWPATLKFSGYRQPTKVFAHGFLTVNGEKMSKSRGTFITARSYLDHVKNPEYLRYYYAAKLNGSMEDIDLNLEDFVARVNSDLVGKYVNIASRTAGFIAKRFDGKLGTVGENAVIAELRAAADSIRESFENRDTARAVRDIMALADKANAYVAEHAPWDMAKQPEQTAALHAVCSVALEMFRLLTLYLKPVLPGLAQAVEKFLKIDPLTWADIDRPLPAGHQIQAYQHLITRIDPKHVEAMVEANKESLQTHAAVVPEQKQVASEATPESVYISIDDFAKVDLRIARIANAEHVEGAEKLLRLSLDIGEERPRQVFAGIKSAYDPESLKGRLTVMVANLAPRKMKFGLSEGMVLAASDERGGPFILSPDSGAQPGMRVK</sequence>
<comment type="function">
    <text evidence="1">Is required not only for elongation of protein synthesis but also for the initiation of all mRNA translation through initiator tRNA(fMet) aminoacylation.</text>
</comment>
<comment type="catalytic activity">
    <reaction evidence="1">
        <text>tRNA(Met) + L-methionine + ATP = L-methionyl-tRNA(Met) + AMP + diphosphate</text>
        <dbReference type="Rhea" id="RHEA:13481"/>
        <dbReference type="Rhea" id="RHEA-COMP:9667"/>
        <dbReference type="Rhea" id="RHEA-COMP:9698"/>
        <dbReference type="ChEBI" id="CHEBI:30616"/>
        <dbReference type="ChEBI" id="CHEBI:33019"/>
        <dbReference type="ChEBI" id="CHEBI:57844"/>
        <dbReference type="ChEBI" id="CHEBI:78442"/>
        <dbReference type="ChEBI" id="CHEBI:78530"/>
        <dbReference type="ChEBI" id="CHEBI:456215"/>
        <dbReference type="EC" id="6.1.1.10"/>
    </reaction>
</comment>
<comment type="cofactor">
    <cofactor evidence="1">
        <name>Zn(2+)</name>
        <dbReference type="ChEBI" id="CHEBI:29105"/>
    </cofactor>
    <text evidence="1">Binds 1 zinc ion per subunit.</text>
</comment>
<comment type="subunit">
    <text evidence="1">Homodimer.</text>
</comment>
<comment type="subcellular location">
    <subcellularLocation>
        <location evidence="1">Cytoplasm</location>
    </subcellularLocation>
</comment>
<comment type="similarity">
    <text evidence="1">Belongs to the class-I aminoacyl-tRNA synthetase family. MetG type 1 subfamily.</text>
</comment>
<evidence type="ECO:0000255" key="1">
    <source>
        <dbReference type="HAMAP-Rule" id="MF_00098"/>
    </source>
</evidence>
<accession>Q1H2F4</accession>
<feature type="chain" id="PRO_0000331851" description="Methionine--tRNA ligase">
    <location>
        <begin position="1"/>
        <end position="692"/>
    </location>
</feature>
<feature type="domain" description="tRNA-binding" evidence="1">
    <location>
        <begin position="590"/>
        <end position="692"/>
    </location>
</feature>
<feature type="short sequence motif" description="'HIGH' region">
    <location>
        <begin position="26"/>
        <end position="36"/>
    </location>
</feature>
<feature type="short sequence motif" description="'KMSKS' region">
    <location>
        <begin position="342"/>
        <end position="346"/>
    </location>
</feature>
<feature type="binding site" evidence="1">
    <location>
        <position position="157"/>
    </location>
    <ligand>
        <name>Zn(2+)</name>
        <dbReference type="ChEBI" id="CHEBI:29105"/>
    </ligand>
</feature>
<feature type="binding site" evidence="1">
    <location>
        <position position="160"/>
    </location>
    <ligand>
        <name>Zn(2+)</name>
        <dbReference type="ChEBI" id="CHEBI:29105"/>
    </ligand>
</feature>
<feature type="binding site" evidence="1">
    <location>
        <position position="170"/>
    </location>
    <ligand>
        <name>Zn(2+)</name>
        <dbReference type="ChEBI" id="CHEBI:29105"/>
    </ligand>
</feature>
<feature type="binding site" evidence="1">
    <location>
        <position position="173"/>
    </location>
    <ligand>
        <name>Zn(2+)</name>
        <dbReference type="ChEBI" id="CHEBI:29105"/>
    </ligand>
</feature>
<feature type="binding site" evidence="1">
    <location>
        <position position="345"/>
    </location>
    <ligand>
        <name>ATP</name>
        <dbReference type="ChEBI" id="CHEBI:30616"/>
    </ligand>
</feature>
<gene>
    <name evidence="1" type="primary">metG1</name>
    <name type="ordered locus">Mfla_0921</name>
</gene>
<gene>
    <name evidence="1" type="primary">metG2</name>
    <name type="ordered locus">Mfla_1065</name>
</gene>